<reference key="1">
    <citation type="journal article" date="2004" name="Nature">
        <title>Genome evolution in yeasts.</title>
        <authorList>
            <person name="Dujon B."/>
            <person name="Sherman D."/>
            <person name="Fischer G."/>
            <person name="Durrens P."/>
            <person name="Casaregola S."/>
            <person name="Lafontaine I."/>
            <person name="de Montigny J."/>
            <person name="Marck C."/>
            <person name="Neuveglise C."/>
            <person name="Talla E."/>
            <person name="Goffard N."/>
            <person name="Frangeul L."/>
            <person name="Aigle M."/>
            <person name="Anthouard V."/>
            <person name="Babour A."/>
            <person name="Barbe V."/>
            <person name="Barnay S."/>
            <person name="Blanchin S."/>
            <person name="Beckerich J.-M."/>
            <person name="Beyne E."/>
            <person name="Bleykasten C."/>
            <person name="Boisrame A."/>
            <person name="Boyer J."/>
            <person name="Cattolico L."/>
            <person name="Confanioleri F."/>
            <person name="de Daruvar A."/>
            <person name="Despons L."/>
            <person name="Fabre E."/>
            <person name="Fairhead C."/>
            <person name="Ferry-Dumazet H."/>
            <person name="Groppi A."/>
            <person name="Hantraye F."/>
            <person name="Hennequin C."/>
            <person name="Jauniaux N."/>
            <person name="Joyet P."/>
            <person name="Kachouri R."/>
            <person name="Kerrest A."/>
            <person name="Koszul R."/>
            <person name="Lemaire M."/>
            <person name="Lesur I."/>
            <person name="Ma L."/>
            <person name="Muller H."/>
            <person name="Nicaud J.-M."/>
            <person name="Nikolski M."/>
            <person name="Oztas S."/>
            <person name="Ozier-Kalogeropoulos O."/>
            <person name="Pellenz S."/>
            <person name="Potier S."/>
            <person name="Richard G.-F."/>
            <person name="Straub M.-L."/>
            <person name="Suleau A."/>
            <person name="Swennen D."/>
            <person name="Tekaia F."/>
            <person name="Wesolowski-Louvel M."/>
            <person name="Westhof E."/>
            <person name="Wirth B."/>
            <person name="Zeniou-Meyer M."/>
            <person name="Zivanovic Y."/>
            <person name="Bolotin-Fukuhara M."/>
            <person name="Thierry A."/>
            <person name="Bouchier C."/>
            <person name="Caudron B."/>
            <person name="Scarpelli C."/>
            <person name="Gaillardin C."/>
            <person name="Weissenbach J."/>
            <person name="Wincker P."/>
            <person name="Souciet J.-L."/>
        </authorList>
    </citation>
    <scope>NUCLEOTIDE SEQUENCE [LARGE SCALE GENOMIC DNA]</scope>
    <source>
        <strain>ATCC 36239 / CBS 767 / BCRC 21394 / JCM 1990 / NBRC 0083 / IGC 2968</strain>
    </source>
</reference>
<comment type="function">
    <text evidence="1">The GINS complex plays an essential role in the initiation of DNA replication.</text>
</comment>
<comment type="subunit">
    <text evidence="1">Component of the GINS complex which is a heterotetramer of SLD5, PSF1, PSF2 and PSF3.</text>
</comment>
<comment type="subcellular location">
    <subcellularLocation>
        <location evidence="1">Nucleus</location>
    </subcellularLocation>
</comment>
<comment type="similarity">
    <text evidence="2">Belongs to the GINS3/PSF3 family.</text>
</comment>
<dbReference type="EMBL" id="CR382133">
    <property type="protein sequence ID" value="CAG84531.2"/>
    <property type="molecule type" value="Genomic_DNA"/>
</dbReference>
<dbReference type="RefSeq" id="XP_456575.2">
    <property type="nucleotide sequence ID" value="XM_456575.1"/>
</dbReference>
<dbReference type="SMR" id="Q6BYZ4"/>
<dbReference type="FunCoup" id="Q6BYZ4">
    <property type="interactions" value="426"/>
</dbReference>
<dbReference type="STRING" id="284592.Q6BYZ4"/>
<dbReference type="GeneID" id="2899916"/>
<dbReference type="KEGG" id="dha:DEHA2A05808g"/>
<dbReference type="VEuPathDB" id="FungiDB:DEHA2A05808g"/>
<dbReference type="eggNOG" id="KOG1106">
    <property type="taxonomic scope" value="Eukaryota"/>
</dbReference>
<dbReference type="HOGENOM" id="CLU_081646_0_1_1"/>
<dbReference type="InParanoid" id="Q6BYZ4"/>
<dbReference type="OMA" id="IYKEGWR"/>
<dbReference type="OrthoDB" id="10251744at2759"/>
<dbReference type="Proteomes" id="UP000000599">
    <property type="component" value="Chromosome A"/>
</dbReference>
<dbReference type="GO" id="GO:0000785">
    <property type="term" value="C:chromatin"/>
    <property type="evidence" value="ECO:0007669"/>
    <property type="project" value="EnsemblFungi"/>
</dbReference>
<dbReference type="GO" id="GO:0000811">
    <property type="term" value="C:GINS complex"/>
    <property type="evidence" value="ECO:0007669"/>
    <property type="project" value="TreeGrafter"/>
</dbReference>
<dbReference type="GO" id="GO:1902975">
    <property type="term" value="P:mitotic DNA replication initiation"/>
    <property type="evidence" value="ECO:0007669"/>
    <property type="project" value="TreeGrafter"/>
</dbReference>
<dbReference type="CDD" id="cd11713">
    <property type="entry name" value="GINS_A_psf3"/>
    <property type="match status" value="1"/>
</dbReference>
<dbReference type="CDD" id="cd21693">
    <property type="entry name" value="GINS_B_Psf3"/>
    <property type="match status" value="1"/>
</dbReference>
<dbReference type="Gene3D" id="1.20.58.2050">
    <property type="match status" value="1"/>
</dbReference>
<dbReference type="InterPro" id="IPR021151">
    <property type="entry name" value="GINS_A"/>
</dbReference>
<dbReference type="InterPro" id="IPR036224">
    <property type="entry name" value="GINS_bundle-like_dom_sf"/>
</dbReference>
<dbReference type="InterPro" id="IPR010492">
    <property type="entry name" value="GINS_Psf3"/>
</dbReference>
<dbReference type="InterPro" id="IPR038437">
    <property type="entry name" value="GINS_Psf3_sf"/>
</dbReference>
<dbReference type="InterPro" id="IPR055221">
    <property type="entry name" value="PSF3_N"/>
</dbReference>
<dbReference type="PANTHER" id="PTHR22768">
    <property type="entry name" value="DNA REPLICATION COMPLEX GINS PROTEIN PSF3"/>
    <property type="match status" value="1"/>
</dbReference>
<dbReference type="PANTHER" id="PTHR22768:SF0">
    <property type="entry name" value="DNA REPLICATION COMPLEX GINS PROTEIN PSF3"/>
    <property type="match status" value="1"/>
</dbReference>
<dbReference type="Pfam" id="PF22466">
    <property type="entry name" value="PSF3_N"/>
    <property type="match status" value="1"/>
</dbReference>
<dbReference type="Pfam" id="PF05916">
    <property type="entry name" value="Sld5"/>
    <property type="match status" value="1"/>
</dbReference>
<dbReference type="SUPFAM" id="SSF158573">
    <property type="entry name" value="GINS helical bundle-like"/>
    <property type="match status" value="1"/>
</dbReference>
<dbReference type="SUPFAM" id="SSF160059">
    <property type="entry name" value="PriA/YqbF domain"/>
    <property type="match status" value="1"/>
</dbReference>
<sequence>MTSNYFDLDDILSDGEKIPCRFNITVPGLGYLEGNPGKSIAKDTKIELPLWLAEILAICELSEDSQQSFIDLSQPDFINYKVINAIKTNAVNIDLHSILTNYYKLSEKWASMFNDVELIEVVMQMLKERSFEINNYASNASKQINNNFIFSLDEFEKKLFKVTSDSNKQMRKWLKD</sequence>
<evidence type="ECO:0000250" key="1"/>
<evidence type="ECO:0000305" key="2"/>
<gene>
    <name type="primary">PSF3</name>
    <name type="ordered locus">DEHA2A05808g</name>
</gene>
<organism>
    <name type="scientific">Debaryomyces hansenii (strain ATCC 36239 / CBS 767 / BCRC 21394 / JCM 1990 / NBRC 0083 / IGC 2968)</name>
    <name type="common">Yeast</name>
    <name type="synonym">Torulaspora hansenii</name>
    <dbReference type="NCBI Taxonomy" id="284592"/>
    <lineage>
        <taxon>Eukaryota</taxon>
        <taxon>Fungi</taxon>
        <taxon>Dikarya</taxon>
        <taxon>Ascomycota</taxon>
        <taxon>Saccharomycotina</taxon>
        <taxon>Pichiomycetes</taxon>
        <taxon>Debaryomycetaceae</taxon>
        <taxon>Debaryomyces</taxon>
    </lineage>
</organism>
<feature type="chain" id="PRO_0000278421" description="DNA replication complex GINS protein PSF3">
    <location>
        <begin position="1"/>
        <end position="176"/>
    </location>
</feature>
<accession>Q6BYZ4</accession>
<protein>
    <recommendedName>
        <fullName>DNA replication complex GINS protein PSF3</fullName>
    </recommendedName>
</protein>
<proteinExistence type="inferred from homology"/>
<name>PSF3_DEBHA</name>
<keyword id="KW-0235">DNA replication</keyword>
<keyword id="KW-0539">Nucleus</keyword>
<keyword id="KW-1185">Reference proteome</keyword>